<accession>Q8NWM8</accession>
<comment type="function">
    <text evidence="1">Binds mRNA; thus facilitating recognition of the initiation point. It is needed to translate mRNA with a short Shine-Dalgarno (SD) purine-rich sequence (By similarity).</text>
</comment>
<comment type="similarity">
    <text evidence="3">Belongs to the bacterial ribosomal protein bS1 family.</text>
</comment>
<proteinExistence type="inferred from homology"/>
<reference key="1">
    <citation type="journal article" date="2002" name="Lancet">
        <title>Genome and virulence determinants of high virulence community-acquired MRSA.</title>
        <authorList>
            <person name="Baba T."/>
            <person name="Takeuchi F."/>
            <person name="Kuroda M."/>
            <person name="Yuzawa H."/>
            <person name="Aoki K."/>
            <person name="Oguchi A."/>
            <person name="Nagai Y."/>
            <person name="Iwama N."/>
            <person name="Asano K."/>
            <person name="Naimi T."/>
            <person name="Kuroda H."/>
            <person name="Cui L."/>
            <person name="Yamamoto K."/>
            <person name="Hiramatsu K."/>
        </authorList>
    </citation>
    <scope>NUCLEOTIDE SEQUENCE [LARGE SCALE GENOMIC DNA]</scope>
    <source>
        <strain>MW2</strain>
    </source>
</reference>
<gene>
    <name type="primary">rpsA</name>
    <name type="ordered locus">MW1365</name>
</gene>
<protein>
    <recommendedName>
        <fullName evidence="3">Small ribosomal subunit protein bS1</fullName>
    </recommendedName>
    <alternativeName>
        <fullName>30S ribosomal protein S1</fullName>
    </alternativeName>
</protein>
<dbReference type="EMBL" id="BA000033">
    <property type="protein sequence ID" value="BAB95230.1"/>
    <property type="molecule type" value="Genomic_DNA"/>
</dbReference>
<dbReference type="RefSeq" id="WP_000133954.1">
    <property type="nucleotide sequence ID" value="NC_003923.1"/>
</dbReference>
<dbReference type="SMR" id="Q8NWM8"/>
<dbReference type="KEGG" id="sam:MW1365"/>
<dbReference type="HOGENOM" id="CLU_015805_4_5_9"/>
<dbReference type="GO" id="GO:0022627">
    <property type="term" value="C:cytosolic small ribosomal subunit"/>
    <property type="evidence" value="ECO:0007669"/>
    <property type="project" value="TreeGrafter"/>
</dbReference>
<dbReference type="GO" id="GO:0003729">
    <property type="term" value="F:mRNA binding"/>
    <property type="evidence" value="ECO:0007669"/>
    <property type="project" value="TreeGrafter"/>
</dbReference>
<dbReference type="GO" id="GO:0003735">
    <property type="term" value="F:structural constituent of ribosome"/>
    <property type="evidence" value="ECO:0007669"/>
    <property type="project" value="TreeGrafter"/>
</dbReference>
<dbReference type="GO" id="GO:0006412">
    <property type="term" value="P:translation"/>
    <property type="evidence" value="ECO:0007669"/>
    <property type="project" value="TreeGrafter"/>
</dbReference>
<dbReference type="CDD" id="cd05687">
    <property type="entry name" value="S1_RPS1_repeat_ec1_hs1"/>
    <property type="match status" value="1"/>
</dbReference>
<dbReference type="CDD" id="cd04465">
    <property type="entry name" value="S1_RPS1_repeat_ec2_hs2"/>
    <property type="match status" value="1"/>
</dbReference>
<dbReference type="CDD" id="cd05688">
    <property type="entry name" value="S1_RPS1_repeat_ec3"/>
    <property type="match status" value="1"/>
</dbReference>
<dbReference type="FunFam" id="2.40.50.140:FF:000114">
    <property type="entry name" value="30S ribosomal protein S1"/>
    <property type="match status" value="2"/>
</dbReference>
<dbReference type="FunFam" id="2.40.50.140:FF:000166">
    <property type="entry name" value="30S ribosomal protein S1"/>
    <property type="match status" value="1"/>
</dbReference>
<dbReference type="FunFam" id="2.40.50.140:FF:000182">
    <property type="entry name" value="30S ribosomal protein S1"/>
    <property type="match status" value="1"/>
</dbReference>
<dbReference type="Gene3D" id="2.40.50.140">
    <property type="entry name" value="Nucleic acid-binding proteins"/>
    <property type="match status" value="4"/>
</dbReference>
<dbReference type="InterPro" id="IPR012340">
    <property type="entry name" value="NA-bd_OB-fold"/>
</dbReference>
<dbReference type="InterPro" id="IPR050437">
    <property type="entry name" value="Ribos_protein_bS1-like"/>
</dbReference>
<dbReference type="InterPro" id="IPR035104">
    <property type="entry name" value="Ribosomal_protein_S1-like"/>
</dbReference>
<dbReference type="InterPro" id="IPR003029">
    <property type="entry name" value="S1_domain"/>
</dbReference>
<dbReference type="NCBIfam" id="NF005208">
    <property type="entry name" value="PRK06676.1"/>
    <property type="match status" value="1"/>
</dbReference>
<dbReference type="PANTHER" id="PTHR10724">
    <property type="entry name" value="30S RIBOSOMAL PROTEIN S1"/>
    <property type="match status" value="1"/>
</dbReference>
<dbReference type="PANTHER" id="PTHR10724:SF7">
    <property type="entry name" value="SMALL RIBOSOMAL SUBUNIT PROTEIN BS1C"/>
    <property type="match status" value="1"/>
</dbReference>
<dbReference type="Pfam" id="PF00575">
    <property type="entry name" value="S1"/>
    <property type="match status" value="4"/>
</dbReference>
<dbReference type="PRINTS" id="PR00681">
    <property type="entry name" value="RIBOSOMALS1"/>
</dbReference>
<dbReference type="SMART" id="SM00316">
    <property type="entry name" value="S1"/>
    <property type="match status" value="4"/>
</dbReference>
<dbReference type="SUPFAM" id="SSF50249">
    <property type="entry name" value="Nucleic acid-binding proteins"/>
    <property type="match status" value="4"/>
</dbReference>
<dbReference type="PROSITE" id="PS50126">
    <property type="entry name" value="S1"/>
    <property type="match status" value="4"/>
</dbReference>
<evidence type="ECO:0000250" key="1"/>
<evidence type="ECO:0000255" key="2">
    <source>
        <dbReference type="PROSITE-ProRule" id="PRU00180"/>
    </source>
</evidence>
<evidence type="ECO:0000305" key="3"/>
<name>RS1_STAAW</name>
<organism>
    <name type="scientific">Staphylococcus aureus (strain MW2)</name>
    <dbReference type="NCBI Taxonomy" id="196620"/>
    <lineage>
        <taxon>Bacteria</taxon>
        <taxon>Bacillati</taxon>
        <taxon>Bacillota</taxon>
        <taxon>Bacilli</taxon>
        <taxon>Bacillales</taxon>
        <taxon>Staphylococcaceae</taxon>
        <taxon>Staphylococcus</taxon>
    </lineage>
</organism>
<sequence length="391" mass="43287">MTEEFNESMINDIKEGDKVTGEVQQVEDKQVVVHINGGKFNGIIPISQLSTHHIDSPSEVVKEGDEVEAYVTKVEFDEENETGAYILSRRQLETEKSYSYLQEKLDNNEIIEAKVTEVVKGGLVVDVGQRGFVPASLISTDFIEDFSVFDGQTIRIKVEELDPENNRVILSRKAVEQEENDAKKDQLLQSLNEGDVIDGKVARLTQFGAFIDIGGVDGLVHVSELSHEHVQTPEEVVSIGQDVKVKIKSIDRDTERISLSIKDTLPTPFENIKGQFHENDVIEGVVVRLANFGAFVEIAPGVQGLVHISEIAHKHIGTPGEVLEPGQQVNVKILGIDEENERVSLSIKATLPNEDVVESDPSTTKAYLENEEEDNPTIGDMIGDKLKNLKL</sequence>
<keyword id="KW-0677">Repeat</keyword>
<keyword id="KW-0687">Ribonucleoprotein</keyword>
<keyword id="KW-0689">Ribosomal protein</keyword>
<keyword id="KW-0694">RNA-binding</keyword>
<feature type="chain" id="PRO_0000196052" description="Small ribosomal subunit protein bS1">
    <location>
        <begin position="1"/>
        <end position="391"/>
    </location>
</feature>
<feature type="domain" description="S1 motif 1" evidence="2">
    <location>
        <begin position="16"/>
        <end position="90"/>
    </location>
</feature>
<feature type="domain" description="S1 motif 2" evidence="2">
    <location>
        <begin position="108"/>
        <end position="173"/>
    </location>
</feature>
<feature type="domain" description="S1 motif 3" evidence="2">
    <location>
        <begin position="194"/>
        <end position="262"/>
    </location>
</feature>
<feature type="domain" description="S1 motif 4" evidence="2">
    <location>
        <begin position="279"/>
        <end position="348"/>
    </location>
</feature>